<proteinExistence type="inferred from homology"/>
<feature type="chain" id="PRO_0000429448" description="Glutamate mutase epsilon subunit">
    <location>
        <begin position="1"/>
        <end position="476"/>
    </location>
</feature>
<feature type="binding site" evidence="1">
    <location>
        <position position="62"/>
    </location>
    <ligand>
        <name>L-glutamate</name>
        <dbReference type="ChEBI" id="CHEBI:29985"/>
    </ligand>
</feature>
<feature type="binding site" evidence="1">
    <location>
        <position position="64"/>
    </location>
    <ligand>
        <name>adenosylcob(III)alamin</name>
        <dbReference type="ChEBI" id="CHEBI:18408"/>
    </ligand>
</feature>
<feature type="binding site" evidence="1">
    <location>
        <position position="96"/>
    </location>
    <ligand>
        <name>L-glutamate</name>
        <dbReference type="ChEBI" id="CHEBI:29985"/>
    </ligand>
</feature>
<feature type="binding site" evidence="1">
    <location>
        <position position="119"/>
    </location>
    <ligand>
        <name>adenosylcob(III)alamin</name>
        <dbReference type="ChEBI" id="CHEBI:18408"/>
    </ligand>
</feature>
<feature type="binding site" evidence="1">
    <location>
        <begin position="145"/>
        <end position="146"/>
    </location>
    <ligand>
        <name>L-glutamate</name>
        <dbReference type="ChEBI" id="CHEBI:29985"/>
    </ligand>
</feature>
<feature type="binding site" evidence="1">
    <location>
        <position position="167"/>
    </location>
    <ligand>
        <name>L-glutamate</name>
        <dbReference type="ChEBI" id="CHEBI:29985"/>
    </ligand>
</feature>
<feature type="binding site" evidence="1">
    <location>
        <position position="173"/>
    </location>
    <ligand>
        <name>L-glutamate</name>
        <dbReference type="ChEBI" id="CHEBI:29985"/>
    </ligand>
</feature>
<feature type="binding site" evidence="1">
    <location>
        <position position="176"/>
    </location>
    <ligand>
        <name>adenosylcob(III)alamin</name>
        <dbReference type="ChEBI" id="CHEBI:18408"/>
    </ligand>
</feature>
<feature type="binding site" evidence="1">
    <location>
        <position position="177"/>
    </location>
    <ligand>
        <name>L-glutamate</name>
        <dbReference type="ChEBI" id="CHEBI:29985"/>
    </ligand>
</feature>
<feature type="binding site" evidence="1">
    <location>
        <position position="289"/>
    </location>
    <ligand>
        <name>adenosylcob(III)alamin</name>
        <dbReference type="ChEBI" id="CHEBI:18408"/>
    </ligand>
</feature>
<feature type="binding site" evidence="1">
    <location>
        <position position="318"/>
    </location>
    <ligand>
        <name>adenosylcob(III)alamin</name>
        <dbReference type="ChEBI" id="CHEBI:18408"/>
    </ligand>
</feature>
<feature type="binding site" evidence="1">
    <location>
        <position position="322"/>
    </location>
    <ligand>
        <name>adenosylcob(III)alamin</name>
        <dbReference type="ChEBI" id="CHEBI:18408"/>
    </ligand>
</feature>
<dbReference type="EC" id="5.4.99.1" evidence="1"/>
<dbReference type="EMBL" id="AE004437">
    <property type="protein sequence ID" value="AAG20401.1"/>
    <property type="molecule type" value="Genomic_DNA"/>
</dbReference>
<dbReference type="PIR" id="E84379">
    <property type="entry name" value="E84379"/>
</dbReference>
<dbReference type="RefSeq" id="WP_010903702.1">
    <property type="nucleotide sequence ID" value="NC_002607.1"/>
</dbReference>
<dbReference type="SMR" id="Q9HN20"/>
<dbReference type="STRING" id="64091.VNG_2288G"/>
<dbReference type="PaxDb" id="64091-VNG_2288G"/>
<dbReference type="KEGG" id="hal:VNG_2288G"/>
<dbReference type="PATRIC" id="fig|64091.14.peg.1764"/>
<dbReference type="HOGENOM" id="CLU_029922_0_0_2"/>
<dbReference type="InParanoid" id="Q9HN20"/>
<dbReference type="OrthoDB" id="191779at2157"/>
<dbReference type="PhylomeDB" id="Q9HN20"/>
<dbReference type="UniPathway" id="UPA00561">
    <property type="reaction ID" value="UER00617"/>
</dbReference>
<dbReference type="Proteomes" id="UP000000554">
    <property type="component" value="Chromosome"/>
</dbReference>
<dbReference type="GO" id="GO:0031419">
    <property type="term" value="F:cobalamin binding"/>
    <property type="evidence" value="ECO:0007669"/>
    <property type="project" value="UniProtKB-KW"/>
</dbReference>
<dbReference type="GO" id="GO:0050097">
    <property type="term" value="F:methylaspartate mutase activity"/>
    <property type="evidence" value="ECO:0007669"/>
    <property type="project" value="UniProtKB-UniRule"/>
</dbReference>
<dbReference type="GO" id="GO:0019670">
    <property type="term" value="P:anaerobic glutamate catabolic process"/>
    <property type="evidence" value="ECO:0007669"/>
    <property type="project" value="InterPro"/>
</dbReference>
<dbReference type="GO" id="GO:0019553">
    <property type="term" value="P:glutamate catabolic process via L-citramalate"/>
    <property type="evidence" value="ECO:0007669"/>
    <property type="project" value="UniProtKB-UniRule"/>
</dbReference>
<dbReference type="CDD" id="cd00245">
    <property type="entry name" value="Glm_e"/>
    <property type="match status" value="1"/>
</dbReference>
<dbReference type="Gene3D" id="3.90.970.10">
    <property type="match status" value="1"/>
</dbReference>
<dbReference type="Gene3D" id="3.20.20.240">
    <property type="entry name" value="Methylmalonyl-CoA mutase"/>
    <property type="match status" value="1"/>
</dbReference>
<dbReference type="HAMAP" id="MF_01923">
    <property type="entry name" value="Me_Asp_mutase_E"/>
    <property type="match status" value="1"/>
</dbReference>
<dbReference type="InterPro" id="IPR016176">
    <property type="entry name" value="Cbl-dep_enz_cat"/>
</dbReference>
<dbReference type="InterPro" id="IPR006396">
    <property type="entry name" value="Glu_mut_E"/>
</dbReference>
<dbReference type="InterPro" id="IPR014714">
    <property type="entry name" value="Glu_mut_E_C_dom_sf"/>
</dbReference>
<dbReference type="NCBIfam" id="TIGR01503">
    <property type="entry name" value="MthylAspMut_E"/>
    <property type="match status" value="1"/>
</dbReference>
<dbReference type="Pfam" id="PF06368">
    <property type="entry name" value="Met_asp_mut_E"/>
    <property type="match status" value="1"/>
</dbReference>
<dbReference type="PIRSF" id="PIRSF001495">
    <property type="entry name" value="Met_asp_mut_epsi"/>
    <property type="match status" value="1"/>
</dbReference>
<dbReference type="SUPFAM" id="SSF51703">
    <property type="entry name" value="Cobalamin (vitamin B12)-dependent enzymes"/>
    <property type="match status" value="1"/>
</dbReference>
<organism>
    <name type="scientific">Halobacterium salinarum (strain ATCC 700922 / JCM 11081 / NRC-1)</name>
    <name type="common">Halobacterium halobium</name>
    <dbReference type="NCBI Taxonomy" id="64091"/>
    <lineage>
        <taxon>Archaea</taxon>
        <taxon>Methanobacteriati</taxon>
        <taxon>Methanobacteriota</taxon>
        <taxon>Stenosarchaea group</taxon>
        <taxon>Halobacteria</taxon>
        <taxon>Halobacteriales</taxon>
        <taxon>Halobacteriaceae</taxon>
        <taxon>Halobacterium</taxon>
        <taxon>Halobacterium salinarum NRC-34001</taxon>
    </lineage>
</organism>
<sequence>MIEDKRLTDTELEAITDRITGDWVSRAAVDFADAVAFHESLPPHKRFAAVLENAEAVLCQPRAGVPRLDEHVELLQHLDEEGGADLLPTTIDSYTRDNAYEKAAEGLARSRETDSSELNGFPAVNHGVEGCREVVRRVDAPVQVRHGTPDARLLAAVTLAGGFQSFEGGPITYNLPYTSAYDLETTIEYWQYVDRLCGAYTERGVTINREPFGPLTGTLVPPSIAIAIVTIEGLLAATQGVRSVTLGYGQVGNLVQDVAAVRAMAAIGAEYLPDSVTVTTVLHQWMGGFPRDEARAHGVIGLAGATAALVEPTKVITKSPQEAVGVPTAESNAAGLRTTDQVLRMLDEQSITLDGVDREQALIERSVRSLLDAVYEAGDGDIARGTVRAFDAGTLDIPFPPSDAAAGDVLPARDDDGRVRLLKFGAVALDDETKRIHRARLDRRADTEGRELSFRMVADDVSAVSDGRLIGRPGDD</sequence>
<protein>
    <recommendedName>
        <fullName evidence="1">Glutamate mutase epsilon subunit</fullName>
        <ecNumber evidence="1">5.4.99.1</ecNumber>
    </recommendedName>
    <alternativeName>
        <fullName evidence="1">Glutamate mutase E chain</fullName>
    </alternativeName>
    <alternativeName>
        <fullName evidence="1">Glutamate mutase large subunit</fullName>
    </alternativeName>
    <alternativeName>
        <fullName evidence="1">Methylaspartate mutase</fullName>
    </alternativeName>
</protein>
<reference key="1">
    <citation type="journal article" date="2000" name="Proc. Natl. Acad. Sci. U.S.A.">
        <title>Genome sequence of Halobacterium species NRC-1.</title>
        <authorList>
            <person name="Ng W.V."/>
            <person name="Kennedy S.P."/>
            <person name="Mahairas G.G."/>
            <person name="Berquist B."/>
            <person name="Pan M."/>
            <person name="Shukla H.D."/>
            <person name="Lasky S.R."/>
            <person name="Baliga N.S."/>
            <person name="Thorsson V."/>
            <person name="Sbrogna J."/>
            <person name="Swartzell S."/>
            <person name="Weir D."/>
            <person name="Hall J."/>
            <person name="Dahl T.A."/>
            <person name="Welti R."/>
            <person name="Goo Y.A."/>
            <person name="Leithauser B."/>
            <person name="Keller K."/>
            <person name="Cruz R."/>
            <person name="Danson M.J."/>
            <person name="Hough D.W."/>
            <person name="Maddocks D.G."/>
            <person name="Jablonski P.E."/>
            <person name="Krebs M.P."/>
            <person name="Angevine C.M."/>
            <person name="Dale H."/>
            <person name="Isenbarger T.A."/>
            <person name="Peck R.F."/>
            <person name="Pohlschroder M."/>
            <person name="Spudich J.L."/>
            <person name="Jung K.-H."/>
            <person name="Alam M."/>
            <person name="Freitas T."/>
            <person name="Hou S."/>
            <person name="Daniels C.J."/>
            <person name="Dennis P.P."/>
            <person name="Omer A.D."/>
            <person name="Ebhardt H."/>
            <person name="Lowe T.M."/>
            <person name="Liang P."/>
            <person name="Riley M."/>
            <person name="Hood L."/>
            <person name="DasSarma S."/>
        </authorList>
    </citation>
    <scope>NUCLEOTIDE SEQUENCE [LARGE SCALE GENOMIC DNA]</scope>
    <source>
        <strain>ATCC 700922 / JCM 11081 / NRC-1</strain>
    </source>
</reference>
<accession>Q9HN20</accession>
<keyword id="KW-0846">Cobalamin</keyword>
<keyword id="KW-0170">Cobalt</keyword>
<keyword id="KW-0413">Isomerase</keyword>
<keyword id="KW-1185">Reference proteome</keyword>
<comment type="function">
    <text evidence="1">Catalyzes the carbon skeleton rearrangement of L-glutamate to L-threo-3-methylaspartate ((2S,3S)-3-methylaspartate).</text>
</comment>
<comment type="catalytic activity">
    <reaction evidence="1">
        <text>(2S,3S)-3-methyl-L-aspartate = L-glutamate</text>
        <dbReference type="Rhea" id="RHEA:12857"/>
        <dbReference type="ChEBI" id="CHEBI:29985"/>
        <dbReference type="ChEBI" id="CHEBI:58724"/>
        <dbReference type="EC" id="5.4.99.1"/>
    </reaction>
</comment>
<comment type="cofactor">
    <cofactor evidence="1">
        <name>adenosylcob(III)alamin</name>
        <dbReference type="ChEBI" id="CHEBI:18408"/>
    </cofactor>
</comment>
<comment type="pathway">
    <text evidence="1">Amino-acid degradation; L-glutamate degradation via mesaconate pathway; acetate and pyruvate from L-glutamate: step 1/4.</text>
</comment>
<comment type="subunit">
    <text evidence="1">Heterotetramer composed of 2 epsilon subunits (GlmE) and 2 sigma subunits (GlmS). GlmE exists as a homodimer and GlmS as a monomer.</text>
</comment>
<comment type="similarity">
    <text evidence="1">Belongs to the methylaspartate mutase GlmE subunit family.</text>
</comment>
<evidence type="ECO:0000255" key="1">
    <source>
        <dbReference type="HAMAP-Rule" id="MF_01923"/>
    </source>
</evidence>
<gene>
    <name evidence="1" type="primary">glmE</name>
    <name type="synonym">mamB</name>
    <name type="ordered locus">VNG_2288G</name>
</gene>
<name>GLME_HALSA</name>